<protein>
    <recommendedName>
        <fullName>DNA-directed RNA polymerase subunit beta</fullName>
        <shortName>RNAP subunit beta</shortName>
        <ecNumber>2.7.7.6</ecNumber>
    </recommendedName>
    <alternativeName>
        <fullName>RNA polymerase subunit beta</fullName>
    </alternativeName>
    <alternativeName>
        <fullName>Transcriptase subunit beta</fullName>
    </alternativeName>
</protein>
<comment type="function">
    <text evidence="1">DNA-dependent RNA polymerase catalyzes the transcription of DNA into RNA using the four ribonucleoside triphosphates as substrates.</text>
</comment>
<comment type="catalytic activity">
    <reaction>
        <text>RNA(n) + a ribonucleoside 5'-triphosphate = RNA(n+1) + diphosphate</text>
        <dbReference type="Rhea" id="RHEA:21248"/>
        <dbReference type="Rhea" id="RHEA-COMP:14527"/>
        <dbReference type="Rhea" id="RHEA-COMP:17342"/>
        <dbReference type="ChEBI" id="CHEBI:33019"/>
        <dbReference type="ChEBI" id="CHEBI:61557"/>
        <dbReference type="ChEBI" id="CHEBI:140395"/>
        <dbReference type="EC" id="2.7.7.6"/>
    </reaction>
</comment>
<comment type="subunit">
    <text evidence="1">The RNAP catalytic core consists of 2 alpha, 1 beta, 1 beta' and 1 omega subunit. When a sigma factor is associated with the core the holoenzyme is formed, which can initiate transcription (By similarity).</text>
</comment>
<comment type="similarity">
    <text evidence="2">Belongs to the RNA polymerase beta chain family.</text>
</comment>
<organism>
    <name type="scientific">Carsonella ruddii (strain PV)</name>
    <dbReference type="NCBI Taxonomy" id="387662"/>
    <lineage>
        <taxon>Bacteria</taxon>
        <taxon>Pseudomonadati</taxon>
        <taxon>Pseudomonadota</taxon>
        <taxon>Gammaproteobacteria</taxon>
        <taxon>Oceanospirillales</taxon>
        <taxon>Halomonadaceae</taxon>
        <taxon>Zymobacter group</taxon>
        <taxon>Candidatus Carsonella</taxon>
    </lineage>
</organism>
<evidence type="ECO:0000250" key="1"/>
<evidence type="ECO:0000305" key="2"/>
<sequence length="1267" mass="149255">MINYLKFNRFCFSKKKFFHKCNLPYLLHNQIGSYNSFLSSKYNSLFSIKKVLKQYFPLICNNKNIFIKLKKIELLEPCNTEKYTKIRNLHLFSTLYMYISIYVINKNLNVYKKIFLGNIPSMTKKGNFIINGIDRILISQFTKSYGIYFYTEKKKKKCIIIPLKGSWLEFIITNNFLIVFDKKINFEINVFLICLGYNKKYFFNFFFFKIKIKIIRGKKRIFFLLNKKKYFYKIYNKYICISIKKILGKLFGKNYFLKKNTFLKFNIIDINKVNLILNYPIYFFFIIFLKKIINLNYLIYIYKNFKLKINKELLQYKKGYIINFFRNLFYKKKYFYSLIGAKRIFKRLFLKKNNKLTIYLEIIKKILKFIKFNIQNDNFDNLENKLILNCGKLLSIKFDFLFKKVIKFINYKMNNFKKYKDLDFIVNSDIITIGLKDYFCNNELSQFLDQNNPLAEISHNRKISLISGIGIEKENCGFDIRDIHYSHYCKVCPIDTPEGHNIGLINSLAYLSKVNKYNFISTIYKISILGKILGITFLDNKFDKHKFIVNFNSTIETIYGEIFRSPYFEARKTNYYYYKKFLNIDLIEICGDQIISVGASLIPFLSHNDANRCLMGSNMQRQAVPLIDSENPIVGTGNELEIGLNSNYNILSDLNGYVLYSDNYKIIIKNNNFIKTYFLEKYTRTNQNTILNQYTKVLKGDFVKVGNIIADSNSTKNGEISLGKNLRVAFMSWYGYNFEDSILLSSSILNKNNFNSIHIYEFITVLKYNENGFEIVSNECFGSNEKIKNKVKNGIIKIGEFVFSKDVIVGKMIPKKKRKFSPEEKLFKIVFSESNFNYYEQPLTVPKNIKGTIIAVNDFKIFYFKNKIFKLLKFEQLNYTCKNINNFFYETFNYYLTKIKKLLFNNKITIKKKRINSYNININNIFKIKCFNKKINFKLNIFKNIISNELLKKKNIFVYKKINFIKHDDFENSIIRIIKIKIAVKKQIAIGDKMSGRHGNKGVVSNIIDYENMPYDKFGNKIDLILNPLGVPSRMNVGQLLEVFLAGSLNLIKSFFLKIKNLNKISYFKMKLFIKIIFKCIYDKNINLNIFNNSLVLKIFKNIKNQLNVCVHNFYNFNVNKVNNIIKTIGINKNCELLLFDGITGKRYLQLVNVGYIYFMKLNHLVIDKIYSRSIGPYSIVTQQPLGGKSNLGGQRLGEMEVWALEAYGAAFLLKEMLTIKSDDILGRIELYKNIIKGINDANSGIPESFQVLMKEIQSLCFDIKIL</sequence>
<feature type="chain" id="PRO_0000300296" description="DNA-directed RNA polymerase subunit beta">
    <location>
        <begin position="1"/>
        <end position="1267"/>
    </location>
</feature>
<name>RPOB_CARRP</name>
<reference key="1">
    <citation type="journal article" date="2006" name="Science">
        <title>The 160-kilobase genome of the bacterial endosymbiont Carsonella.</title>
        <authorList>
            <person name="Nakabachi A."/>
            <person name="Yamashita A."/>
            <person name="Toh H."/>
            <person name="Ishikawa H."/>
            <person name="Dunbar H.E."/>
            <person name="Moran N.A."/>
            <person name="Hattori M."/>
        </authorList>
    </citation>
    <scope>NUCLEOTIDE SEQUENCE [LARGE SCALE GENOMIC DNA]</scope>
    <source>
        <strain>PV</strain>
    </source>
</reference>
<dbReference type="EC" id="2.7.7.6"/>
<dbReference type="EMBL" id="AP009180">
    <property type="protein sequence ID" value="BAF35193.1"/>
    <property type="molecule type" value="Genomic_DNA"/>
</dbReference>
<dbReference type="RefSeq" id="WP_011672385.1">
    <property type="nucleotide sequence ID" value="NC_008512.1"/>
</dbReference>
<dbReference type="SMR" id="Q05FH8"/>
<dbReference type="STRING" id="387662.CRP_162"/>
<dbReference type="KEGG" id="crp:CRP_162"/>
<dbReference type="HOGENOM" id="CLU_000524_4_0_6"/>
<dbReference type="OrthoDB" id="9803954at2"/>
<dbReference type="Proteomes" id="UP000000777">
    <property type="component" value="Chromosome"/>
</dbReference>
<dbReference type="GO" id="GO:0000428">
    <property type="term" value="C:DNA-directed RNA polymerase complex"/>
    <property type="evidence" value="ECO:0007669"/>
    <property type="project" value="UniProtKB-KW"/>
</dbReference>
<dbReference type="GO" id="GO:0003677">
    <property type="term" value="F:DNA binding"/>
    <property type="evidence" value="ECO:0007669"/>
    <property type="project" value="InterPro"/>
</dbReference>
<dbReference type="GO" id="GO:0003899">
    <property type="term" value="F:DNA-directed RNA polymerase activity"/>
    <property type="evidence" value="ECO:0007669"/>
    <property type="project" value="UniProtKB-EC"/>
</dbReference>
<dbReference type="GO" id="GO:0032549">
    <property type="term" value="F:ribonucleoside binding"/>
    <property type="evidence" value="ECO:0007669"/>
    <property type="project" value="InterPro"/>
</dbReference>
<dbReference type="GO" id="GO:0006351">
    <property type="term" value="P:DNA-templated transcription"/>
    <property type="evidence" value="ECO:0007669"/>
    <property type="project" value="InterPro"/>
</dbReference>
<dbReference type="CDD" id="cd00653">
    <property type="entry name" value="RNA_pol_B_RPB2"/>
    <property type="match status" value="1"/>
</dbReference>
<dbReference type="Gene3D" id="2.40.50.100">
    <property type="match status" value="1"/>
</dbReference>
<dbReference type="Gene3D" id="2.40.50.150">
    <property type="match status" value="1"/>
</dbReference>
<dbReference type="Gene3D" id="3.90.1100.10">
    <property type="match status" value="2"/>
</dbReference>
<dbReference type="Gene3D" id="2.40.270.10">
    <property type="entry name" value="DNA-directed RNA polymerase, subunit 2, domain 6"/>
    <property type="match status" value="1"/>
</dbReference>
<dbReference type="Gene3D" id="3.90.1800.10">
    <property type="entry name" value="RNA polymerase alpha subunit dimerisation domain"/>
    <property type="match status" value="1"/>
</dbReference>
<dbReference type="InterPro" id="IPR015712">
    <property type="entry name" value="DNA-dir_RNA_pol_su2"/>
</dbReference>
<dbReference type="InterPro" id="IPR007120">
    <property type="entry name" value="DNA-dir_RNAP_su2_dom"/>
</dbReference>
<dbReference type="InterPro" id="IPR037033">
    <property type="entry name" value="DNA-dir_RNAP_su2_hyb_sf"/>
</dbReference>
<dbReference type="InterPro" id="IPR010243">
    <property type="entry name" value="RNA_pol_bsu_bac"/>
</dbReference>
<dbReference type="InterPro" id="IPR007121">
    <property type="entry name" value="RNA_pol_bsu_CS"/>
</dbReference>
<dbReference type="InterPro" id="IPR007644">
    <property type="entry name" value="RNA_pol_bsu_protrusion"/>
</dbReference>
<dbReference type="InterPro" id="IPR007645">
    <property type="entry name" value="RNA_pol_Rpb2_3"/>
</dbReference>
<dbReference type="InterPro" id="IPR007641">
    <property type="entry name" value="RNA_pol_Rpb2_7"/>
</dbReference>
<dbReference type="InterPro" id="IPR014724">
    <property type="entry name" value="RNA_pol_RPB2_OB-fold"/>
</dbReference>
<dbReference type="NCBIfam" id="NF001616">
    <property type="entry name" value="PRK00405.1"/>
    <property type="match status" value="1"/>
</dbReference>
<dbReference type="NCBIfam" id="TIGR02013">
    <property type="entry name" value="rpoB"/>
    <property type="match status" value="1"/>
</dbReference>
<dbReference type="PANTHER" id="PTHR20856">
    <property type="entry name" value="DNA-DIRECTED RNA POLYMERASE I SUBUNIT 2"/>
    <property type="match status" value="1"/>
</dbReference>
<dbReference type="Pfam" id="PF04563">
    <property type="entry name" value="RNA_pol_Rpb2_1"/>
    <property type="match status" value="1"/>
</dbReference>
<dbReference type="Pfam" id="PF04565">
    <property type="entry name" value="RNA_pol_Rpb2_3"/>
    <property type="match status" value="1"/>
</dbReference>
<dbReference type="Pfam" id="PF00562">
    <property type="entry name" value="RNA_pol_Rpb2_6"/>
    <property type="match status" value="1"/>
</dbReference>
<dbReference type="Pfam" id="PF04560">
    <property type="entry name" value="RNA_pol_Rpb2_7"/>
    <property type="match status" value="1"/>
</dbReference>
<dbReference type="SUPFAM" id="SSF64484">
    <property type="entry name" value="beta and beta-prime subunits of DNA dependent RNA-polymerase"/>
    <property type="match status" value="1"/>
</dbReference>
<dbReference type="PROSITE" id="PS01166">
    <property type="entry name" value="RNA_POL_BETA"/>
    <property type="match status" value="1"/>
</dbReference>
<proteinExistence type="inferred from homology"/>
<accession>Q05FH8</accession>
<keyword id="KW-0240">DNA-directed RNA polymerase</keyword>
<keyword id="KW-0548">Nucleotidyltransferase</keyword>
<keyword id="KW-0804">Transcription</keyword>
<keyword id="KW-0808">Transferase</keyword>
<gene>
    <name type="primary">rpoB</name>
    <name type="ordered locus">CRP_162</name>
</gene>